<gene>
    <name evidence="1" type="primary">rplN</name>
    <name type="ordered locus">FMG_0165</name>
</gene>
<name>RL14_FINM2</name>
<dbReference type="EMBL" id="AP008971">
    <property type="protein sequence ID" value="BAG07583.1"/>
    <property type="molecule type" value="Genomic_DNA"/>
</dbReference>
<dbReference type="RefSeq" id="WP_002836120.1">
    <property type="nucleotide sequence ID" value="NC_010376.1"/>
</dbReference>
<dbReference type="SMR" id="B0RZR9"/>
<dbReference type="STRING" id="334413.FMG_0165"/>
<dbReference type="GeneID" id="60839400"/>
<dbReference type="KEGG" id="fma:FMG_0165"/>
<dbReference type="eggNOG" id="COG0093">
    <property type="taxonomic scope" value="Bacteria"/>
</dbReference>
<dbReference type="HOGENOM" id="CLU_095071_2_1_9"/>
<dbReference type="Proteomes" id="UP000001319">
    <property type="component" value="Chromosome"/>
</dbReference>
<dbReference type="GO" id="GO:0022625">
    <property type="term" value="C:cytosolic large ribosomal subunit"/>
    <property type="evidence" value="ECO:0007669"/>
    <property type="project" value="TreeGrafter"/>
</dbReference>
<dbReference type="GO" id="GO:0070180">
    <property type="term" value="F:large ribosomal subunit rRNA binding"/>
    <property type="evidence" value="ECO:0007669"/>
    <property type="project" value="TreeGrafter"/>
</dbReference>
<dbReference type="GO" id="GO:0003735">
    <property type="term" value="F:structural constituent of ribosome"/>
    <property type="evidence" value="ECO:0007669"/>
    <property type="project" value="InterPro"/>
</dbReference>
<dbReference type="GO" id="GO:0006412">
    <property type="term" value="P:translation"/>
    <property type="evidence" value="ECO:0007669"/>
    <property type="project" value="UniProtKB-UniRule"/>
</dbReference>
<dbReference type="CDD" id="cd00337">
    <property type="entry name" value="Ribosomal_uL14"/>
    <property type="match status" value="1"/>
</dbReference>
<dbReference type="FunFam" id="2.40.150.20:FF:000001">
    <property type="entry name" value="50S ribosomal protein L14"/>
    <property type="match status" value="1"/>
</dbReference>
<dbReference type="Gene3D" id="2.40.150.20">
    <property type="entry name" value="Ribosomal protein L14"/>
    <property type="match status" value="1"/>
</dbReference>
<dbReference type="HAMAP" id="MF_01367">
    <property type="entry name" value="Ribosomal_uL14"/>
    <property type="match status" value="1"/>
</dbReference>
<dbReference type="InterPro" id="IPR000218">
    <property type="entry name" value="Ribosomal_uL14"/>
</dbReference>
<dbReference type="InterPro" id="IPR005745">
    <property type="entry name" value="Ribosomal_uL14_bac-type"/>
</dbReference>
<dbReference type="InterPro" id="IPR019972">
    <property type="entry name" value="Ribosomal_uL14_CS"/>
</dbReference>
<dbReference type="InterPro" id="IPR036853">
    <property type="entry name" value="Ribosomal_uL14_sf"/>
</dbReference>
<dbReference type="NCBIfam" id="TIGR01067">
    <property type="entry name" value="rplN_bact"/>
    <property type="match status" value="1"/>
</dbReference>
<dbReference type="PANTHER" id="PTHR11761">
    <property type="entry name" value="50S/60S RIBOSOMAL PROTEIN L14/L23"/>
    <property type="match status" value="1"/>
</dbReference>
<dbReference type="PANTHER" id="PTHR11761:SF3">
    <property type="entry name" value="LARGE RIBOSOMAL SUBUNIT PROTEIN UL14M"/>
    <property type="match status" value="1"/>
</dbReference>
<dbReference type="Pfam" id="PF00238">
    <property type="entry name" value="Ribosomal_L14"/>
    <property type="match status" value="1"/>
</dbReference>
<dbReference type="SMART" id="SM01374">
    <property type="entry name" value="Ribosomal_L14"/>
    <property type="match status" value="1"/>
</dbReference>
<dbReference type="SUPFAM" id="SSF50193">
    <property type="entry name" value="Ribosomal protein L14"/>
    <property type="match status" value="1"/>
</dbReference>
<dbReference type="PROSITE" id="PS00049">
    <property type="entry name" value="RIBOSOMAL_L14"/>
    <property type="match status" value="1"/>
</dbReference>
<feature type="chain" id="PRO_1000144274" description="Large ribosomal subunit protein uL14">
    <location>
        <begin position="1"/>
        <end position="122"/>
    </location>
</feature>
<evidence type="ECO:0000255" key="1">
    <source>
        <dbReference type="HAMAP-Rule" id="MF_01367"/>
    </source>
</evidence>
<evidence type="ECO:0000305" key="2"/>
<organism>
    <name type="scientific">Finegoldia magna (strain ATCC 29328 / DSM 20472 / WAL 2508)</name>
    <name type="common">Peptostreptococcus magnus</name>
    <dbReference type="NCBI Taxonomy" id="334413"/>
    <lineage>
        <taxon>Bacteria</taxon>
        <taxon>Bacillati</taxon>
        <taxon>Bacillota</taxon>
        <taxon>Tissierellia</taxon>
        <taxon>Tissierellales</taxon>
        <taxon>Peptoniphilaceae</taxon>
        <taxon>Finegoldia</taxon>
    </lineage>
</organism>
<accession>B0RZR9</accession>
<protein>
    <recommendedName>
        <fullName evidence="1">Large ribosomal subunit protein uL14</fullName>
    </recommendedName>
    <alternativeName>
        <fullName evidence="2">50S ribosomal protein L14</fullName>
    </alternativeName>
</protein>
<proteinExistence type="inferred from homology"/>
<keyword id="KW-1185">Reference proteome</keyword>
<keyword id="KW-0687">Ribonucleoprotein</keyword>
<keyword id="KW-0689">Ribosomal protein</keyword>
<keyword id="KW-0694">RNA-binding</keyword>
<keyword id="KW-0699">rRNA-binding</keyword>
<sequence>MIQQESRLRVADNSGAKELLVIRVLGGTKRKYAAIGDIVVCSVKSAQPGGMVKKGDVVKAVIVRTTKPLGRADGSYIRFDDNAAVIIKDDKNPVGTRIFGSVTRELRANNFMKIISLAPEVL</sequence>
<reference key="1">
    <citation type="journal article" date="2008" name="DNA Res.">
        <title>Complete genome sequence of Finegoldia magna, an anaerobic opportunistic pathogen.</title>
        <authorList>
            <person name="Goto T."/>
            <person name="Yamashita A."/>
            <person name="Hirakawa H."/>
            <person name="Matsutani M."/>
            <person name="Todo K."/>
            <person name="Ohshima K."/>
            <person name="Toh H."/>
            <person name="Miyamoto K."/>
            <person name="Kuhara S."/>
            <person name="Hattori M."/>
            <person name="Shimizu T."/>
            <person name="Akimoto S."/>
        </authorList>
    </citation>
    <scope>NUCLEOTIDE SEQUENCE [LARGE SCALE GENOMIC DNA]</scope>
    <source>
        <strain>ATCC 29328 / DSM 20472 / WAL 2508</strain>
    </source>
</reference>
<comment type="function">
    <text evidence="1">Binds to 23S rRNA. Forms part of two intersubunit bridges in the 70S ribosome.</text>
</comment>
<comment type="subunit">
    <text evidence="1">Part of the 50S ribosomal subunit. Forms a cluster with proteins L3 and L19. In the 70S ribosome, L14 and L19 interact and together make contacts with the 16S rRNA in bridges B5 and B8.</text>
</comment>
<comment type="similarity">
    <text evidence="1">Belongs to the universal ribosomal protein uL14 family.</text>
</comment>